<organism>
    <name type="scientific">Edwardsiella ictaluri (strain 93-146)</name>
    <dbReference type="NCBI Taxonomy" id="634503"/>
    <lineage>
        <taxon>Bacteria</taxon>
        <taxon>Pseudomonadati</taxon>
        <taxon>Pseudomonadota</taxon>
        <taxon>Gammaproteobacteria</taxon>
        <taxon>Enterobacterales</taxon>
        <taxon>Hafniaceae</taxon>
        <taxon>Edwardsiella</taxon>
    </lineage>
</organism>
<name>Y1577_EDWI9</name>
<feature type="chain" id="PRO_1000215508" description="Probable phosphatase NT01EI_1577">
    <location>
        <begin position="1"/>
        <end position="245"/>
    </location>
</feature>
<feature type="binding site" evidence="1">
    <location>
        <position position="7"/>
    </location>
    <ligand>
        <name>Zn(2+)</name>
        <dbReference type="ChEBI" id="CHEBI:29105"/>
        <label>1</label>
    </ligand>
</feature>
<feature type="binding site" evidence="1">
    <location>
        <position position="9"/>
    </location>
    <ligand>
        <name>Zn(2+)</name>
        <dbReference type="ChEBI" id="CHEBI:29105"/>
        <label>1</label>
    </ligand>
</feature>
<feature type="binding site" evidence="1">
    <location>
        <position position="15"/>
    </location>
    <ligand>
        <name>Zn(2+)</name>
        <dbReference type="ChEBI" id="CHEBI:29105"/>
        <label>2</label>
    </ligand>
</feature>
<feature type="binding site" evidence="1">
    <location>
        <position position="40"/>
    </location>
    <ligand>
        <name>Zn(2+)</name>
        <dbReference type="ChEBI" id="CHEBI:29105"/>
        <label>2</label>
    </ligand>
</feature>
<feature type="binding site" evidence="1">
    <location>
        <position position="73"/>
    </location>
    <ligand>
        <name>Zn(2+)</name>
        <dbReference type="ChEBI" id="CHEBI:29105"/>
        <label>1</label>
    </ligand>
</feature>
<feature type="binding site" evidence="1">
    <location>
        <position position="73"/>
    </location>
    <ligand>
        <name>Zn(2+)</name>
        <dbReference type="ChEBI" id="CHEBI:29105"/>
        <label>3</label>
    </ligand>
</feature>
<feature type="binding site" evidence="1">
    <location>
        <position position="101"/>
    </location>
    <ligand>
        <name>Zn(2+)</name>
        <dbReference type="ChEBI" id="CHEBI:29105"/>
        <label>3</label>
    </ligand>
</feature>
<feature type="binding site" evidence="1">
    <location>
        <position position="131"/>
    </location>
    <ligand>
        <name>Zn(2+)</name>
        <dbReference type="ChEBI" id="CHEBI:29105"/>
        <label>3</label>
    </ligand>
</feature>
<feature type="binding site" evidence="1">
    <location>
        <position position="192"/>
    </location>
    <ligand>
        <name>Zn(2+)</name>
        <dbReference type="ChEBI" id="CHEBI:29105"/>
        <label>1</label>
    </ligand>
</feature>
<feature type="binding site" evidence="1">
    <location>
        <position position="194"/>
    </location>
    <ligand>
        <name>Zn(2+)</name>
        <dbReference type="ChEBI" id="CHEBI:29105"/>
        <label>2</label>
    </ligand>
</feature>
<protein>
    <recommendedName>
        <fullName evidence="1">Probable phosphatase NT01EI_1577</fullName>
        <ecNumber evidence="1">3.1.3.-</ecNumber>
    </recommendedName>
</protein>
<comment type="cofactor">
    <cofactor evidence="1">
        <name>Zn(2+)</name>
        <dbReference type="ChEBI" id="CHEBI:29105"/>
    </cofactor>
    <text evidence="1">Binds 3 Zn(2+) ions per subunit.</text>
</comment>
<comment type="subunit">
    <text evidence="1">Homotrimer.</text>
</comment>
<comment type="similarity">
    <text evidence="1">Belongs to the PHP family.</text>
</comment>
<dbReference type="EC" id="3.1.3.-" evidence="1"/>
<dbReference type="EMBL" id="CP001600">
    <property type="protein sequence ID" value="ACR68761.1"/>
    <property type="molecule type" value="Genomic_DNA"/>
</dbReference>
<dbReference type="RefSeq" id="WP_015870919.1">
    <property type="nucleotide sequence ID" value="NZ_CP169062.1"/>
</dbReference>
<dbReference type="SMR" id="C5B825"/>
<dbReference type="STRING" id="67780.B6E78_01075"/>
<dbReference type="KEGG" id="eic:NT01EI_1577"/>
<dbReference type="PATRIC" id="fig|634503.3.peg.1409"/>
<dbReference type="HOGENOM" id="CLU_061999_0_1_6"/>
<dbReference type="OrthoDB" id="9808747at2"/>
<dbReference type="Proteomes" id="UP000001485">
    <property type="component" value="Chromosome"/>
</dbReference>
<dbReference type="GO" id="GO:0005829">
    <property type="term" value="C:cytosol"/>
    <property type="evidence" value="ECO:0007669"/>
    <property type="project" value="TreeGrafter"/>
</dbReference>
<dbReference type="GO" id="GO:0016791">
    <property type="term" value="F:phosphatase activity"/>
    <property type="evidence" value="ECO:0007669"/>
    <property type="project" value="UniProtKB-UniRule"/>
</dbReference>
<dbReference type="GO" id="GO:0008270">
    <property type="term" value="F:zinc ion binding"/>
    <property type="evidence" value="ECO:0007669"/>
    <property type="project" value="UniProtKB-UniRule"/>
</dbReference>
<dbReference type="GO" id="GO:0071978">
    <property type="term" value="P:bacterial-type flagellum-dependent swarming motility"/>
    <property type="evidence" value="ECO:0007669"/>
    <property type="project" value="TreeGrafter"/>
</dbReference>
<dbReference type="CDD" id="cd07437">
    <property type="entry name" value="PHP_HisPPase_Ycdx_like"/>
    <property type="match status" value="1"/>
</dbReference>
<dbReference type="FunFam" id="3.20.20.140:FF:000008">
    <property type="entry name" value="Probable phosphatase YcdX"/>
    <property type="match status" value="1"/>
</dbReference>
<dbReference type="Gene3D" id="3.20.20.140">
    <property type="entry name" value="Metal-dependent hydrolases"/>
    <property type="match status" value="1"/>
</dbReference>
<dbReference type="HAMAP" id="MF_01561">
    <property type="entry name" value="YcdX_phosphat"/>
    <property type="match status" value="1"/>
</dbReference>
<dbReference type="InterPro" id="IPR023710">
    <property type="entry name" value="Phosphatase_YcdX_put"/>
</dbReference>
<dbReference type="InterPro" id="IPR004013">
    <property type="entry name" value="PHP_dom"/>
</dbReference>
<dbReference type="InterPro" id="IPR050243">
    <property type="entry name" value="PHP_phosphatase"/>
</dbReference>
<dbReference type="InterPro" id="IPR003141">
    <property type="entry name" value="Pol/His_phosphatase_N"/>
</dbReference>
<dbReference type="InterPro" id="IPR016195">
    <property type="entry name" value="Pol/histidinol_Pase-like"/>
</dbReference>
<dbReference type="NCBIfam" id="NF006702">
    <property type="entry name" value="PRK09248.1"/>
    <property type="match status" value="1"/>
</dbReference>
<dbReference type="PANTHER" id="PTHR36928">
    <property type="entry name" value="PHOSPHATASE YCDX-RELATED"/>
    <property type="match status" value="1"/>
</dbReference>
<dbReference type="PANTHER" id="PTHR36928:SF1">
    <property type="entry name" value="PHOSPHATASE YCDX-RELATED"/>
    <property type="match status" value="1"/>
</dbReference>
<dbReference type="Pfam" id="PF02811">
    <property type="entry name" value="PHP"/>
    <property type="match status" value="1"/>
</dbReference>
<dbReference type="SMART" id="SM00481">
    <property type="entry name" value="POLIIIAc"/>
    <property type="match status" value="1"/>
</dbReference>
<dbReference type="SUPFAM" id="SSF89550">
    <property type="entry name" value="PHP domain-like"/>
    <property type="match status" value="1"/>
</dbReference>
<proteinExistence type="inferred from homology"/>
<keyword id="KW-0378">Hydrolase</keyword>
<keyword id="KW-0479">Metal-binding</keyword>
<keyword id="KW-0862">Zinc</keyword>
<evidence type="ECO:0000255" key="1">
    <source>
        <dbReference type="HAMAP-Rule" id="MF_01561"/>
    </source>
</evidence>
<gene>
    <name type="ordered locus">NT01EI_1577</name>
</gene>
<sequence length="245" mass="26931">MYSVDLHMHTVASTHAYSTLHDYIAQAVARGLRLFAITDHGPEMADAPHPWHFMNMRVWPRTVNGVGILRGIEANIKSRQGDIDCHGRMLAEMDVVIAGFHEPVLAPVDRAFHTEALLATIARGEADIISHPGNPKYPLDIPAVARAAAEHGVALELNNSSFSHSRAGSADNCRTIAAAVRDAGGWLSLGSDAHIAFDMGNFNHCIRVLNEVNFPPERVLNASPRRVLDFLQRRGRPVIPEFADW</sequence>
<reference key="1">
    <citation type="submission" date="2009-03" db="EMBL/GenBank/DDBJ databases">
        <title>Complete genome sequence of Edwardsiella ictaluri 93-146.</title>
        <authorList>
            <person name="Williams M.L."/>
            <person name="Gillaspy A.F."/>
            <person name="Dyer D.W."/>
            <person name="Thune R.L."/>
            <person name="Waldbieser G.C."/>
            <person name="Schuster S.C."/>
            <person name="Gipson J."/>
            <person name="Zaitshik J."/>
            <person name="Landry C."/>
            <person name="Lawrence M.L."/>
        </authorList>
    </citation>
    <scope>NUCLEOTIDE SEQUENCE [LARGE SCALE GENOMIC DNA]</scope>
    <source>
        <strain>93-146</strain>
    </source>
</reference>
<accession>C5B825</accession>